<reference key="1">
    <citation type="journal article" date="2006" name="Proc. Natl. Acad. Sci. U.S.A.">
        <title>Multireplicon genome architecture of Lactobacillus salivarius.</title>
        <authorList>
            <person name="Claesson M.J."/>
            <person name="Li Y."/>
            <person name="Leahy S."/>
            <person name="Canchaya C."/>
            <person name="van Pijkeren J.P."/>
            <person name="Cerdeno-Tarraga A.M."/>
            <person name="Parkhill J."/>
            <person name="Flynn S."/>
            <person name="O'Sullivan G.C."/>
            <person name="Collins J.K."/>
            <person name="Higgins D."/>
            <person name="Shanahan F."/>
            <person name="Fitzgerald G.F."/>
            <person name="van Sinderen D."/>
            <person name="O'Toole P.W."/>
        </authorList>
    </citation>
    <scope>NUCLEOTIDE SEQUENCE [LARGE SCALE GENOMIC DNA]</scope>
    <source>
        <strain>UCC118</strain>
    </source>
</reference>
<protein>
    <recommendedName>
        <fullName evidence="1">Large ribosomal subunit protein bL17</fullName>
    </recommendedName>
    <alternativeName>
        <fullName evidence="2">50S ribosomal protein L17</fullName>
    </alternativeName>
</protein>
<gene>
    <name evidence="1" type="primary">rplQ</name>
    <name type="ordered locus">LSL_1408</name>
</gene>
<dbReference type="EMBL" id="CP000233">
    <property type="protein sequence ID" value="ABE00212.1"/>
    <property type="molecule type" value="Genomic_DNA"/>
</dbReference>
<dbReference type="RefSeq" id="WP_003701337.1">
    <property type="nucleotide sequence ID" value="NC_007929.1"/>
</dbReference>
<dbReference type="RefSeq" id="YP_536295.1">
    <property type="nucleotide sequence ID" value="NC_007929.1"/>
</dbReference>
<dbReference type="SMR" id="Q1WSB7"/>
<dbReference type="STRING" id="362948.LSL_1408"/>
<dbReference type="GeneID" id="89466143"/>
<dbReference type="KEGG" id="lsl:LSL_1408"/>
<dbReference type="PATRIC" id="fig|362948.14.peg.1491"/>
<dbReference type="HOGENOM" id="CLU_074407_2_2_9"/>
<dbReference type="OrthoDB" id="9809073at2"/>
<dbReference type="Proteomes" id="UP000006559">
    <property type="component" value="Chromosome"/>
</dbReference>
<dbReference type="GO" id="GO:0022625">
    <property type="term" value="C:cytosolic large ribosomal subunit"/>
    <property type="evidence" value="ECO:0007669"/>
    <property type="project" value="TreeGrafter"/>
</dbReference>
<dbReference type="GO" id="GO:0003735">
    <property type="term" value="F:structural constituent of ribosome"/>
    <property type="evidence" value="ECO:0007669"/>
    <property type="project" value="InterPro"/>
</dbReference>
<dbReference type="GO" id="GO:0006412">
    <property type="term" value="P:translation"/>
    <property type="evidence" value="ECO:0007669"/>
    <property type="project" value="UniProtKB-UniRule"/>
</dbReference>
<dbReference type="FunFam" id="3.90.1030.10:FF:000002">
    <property type="entry name" value="50S ribosomal protein L17"/>
    <property type="match status" value="1"/>
</dbReference>
<dbReference type="Gene3D" id="3.90.1030.10">
    <property type="entry name" value="Ribosomal protein L17"/>
    <property type="match status" value="1"/>
</dbReference>
<dbReference type="HAMAP" id="MF_01368">
    <property type="entry name" value="Ribosomal_bL17"/>
    <property type="match status" value="1"/>
</dbReference>
<dbReference type="InterPro" id="IPR000456">
    <property type="entry name" value="Ribosomal_bL17"/>
</dbReference>
<dbReference type="InterPro" id="IPR047859">
    <property type="entry name" value="Ribosomal_bL17_CS"/>
</dbReference>
<dbReference type="InterPro" id="IPR036373">
    <property type="entry name" value="Ribosomal_bL17_sf"/>
</dbReference>
<dbReference type="NCBIfam" id="TIGR00059">
    <property type="entry name" value="L17"/>
    <property type="match status" value="1"/>
</dbReference>
<dbReference type="PANTHER" id="PTHR14413:SF16">
    <property type="entry name" value="LARGE RIBOSOMAL SUBUNIT PROTEIN BL17M"/>
    <property type="match status" value="1"/>
</dbReference>
<dbReference type="PANTHER" id="PTHR14413">
    <property type="entry name" value="RIBOSOMAL PROTEIN L17"/>
    <property type="match status" value="1"/>
</dbReference>
<dbReference type="Pfam" id="PF01196">
    <property type="entry name" value="Ribosomal_L17"/>
    <property type="match status" value="1"/>
</dbReference>
<dbReference type="SUPFAM" id="SSF64263">
    <property type="entry name" value="Prokaryotic ribosomal protein L17"/>
    <property type="match status" value="1"/>
</dbReference>
<dbReference type="PROSITE" id="PS01167">
    <property type="entry name" value="RIBOSOMAL_L17"/>
    <property type="match status" value="1"/>
</dbReference>
<accession>Q1WSB7</accession>
<feature type="chain" id="PRO_1000055857" description="Large ribosomal subunit protein bL17">
    <location>
        <begin position="1"/>
        <end position="127"/>
    </location>
</feature>
<comment type="subunit">
    <text evidence="1">Part of the 50S ribosomal subunit. Contacts protein L32.</text>
</comment>
<comment type="similarity">
    <text evidence="1">Belongs to the bacterial ribosomal protein bL17 family.</text>
</comment>
<organism>
    <name type="scientific">Ligilactobacillus salivarius (strain UCC118)</name>
    <name type="common">Lactobacillus salivarius</name>
    <dbReference type="NCBI Taxonomy" id="362948"/>
    <lineage>
        <taxon>Bacteria</taxon>
        <taxon>Bacillati</taxon>
        <taxon>Bacillota</taxon>
        <taxon>Bacilli</taxon>
        <taxon>Lactobacillales</taxon>
        <taxon>Lactobacillaceae</taxon>
        <taxon>Ligilactobacillus</taxon>
    </lineage>
</organism>
<name>RL17_LIGS1</name>
<proteinExistence type="inferred from homology"/>
<keyword id="KW-1185">Reference proteome</keyword>
<keyword id="KW-0687">Ribonucleoprotein</keyword>
<keyword id="KW-0689">Ribosomal protein</keyword>
<evidence type="ECO:0000255" key="1">
    <source>
        <dbReference type="HAMAP-Rule" id="MF_01368"/>
    </source>
</evidence>
<evidence type="ECO:0000305" key="2"/>
<sequence>MAYRKLGRTSAHRKAMLRNLTTDLIVNEKIVTTETRAKEVRKFVEKMITLGKKGDLASRRRAAAFVMNVVADVKEENDDVVVQSALQKLFDDLAPRFAERNGGYTRILKMSERRGDAAKMVVLELVD</sequence>